<feature type="chain" id="PRO_0000423728" description="SWR1 complex subunit 6">
    <location>
        <begin position="1"/>
        <end position="171"/>
    </location>
</feature>
<feature type="zinc finger region" description="HIT-type" evidence="1">
    <location>
        <begin position="134"/>
        <end position="166"/>
    </location>
</feature>
<feature type="region of interest" description="Disordered" evidence="2">
    <location>
        <begin position="63"/>
        <end position="87"/>
    </location>
</feature>
<feature type="compositionally biased region" description="Basic residues" evidence="2">
    <location>
        <begin position="73"/>
        <end position="85"/>
    </location>
</feature>
<feature type="binding site" evidence="1">
    <location>
        <position position="134"/>
    </location>
    <ligand>
        <name>Zn(2+)</name>
        <dbReference type="ChEBI" id="CHEBI:29105"/>
        <label>1</label>
    </ligand>
</feature>
<feature type="binding site" evidence="1">
    <location>
        <position position="137"/>
    </location>
    <ligand>
        <name>Zn(2+)</name>
        <dbReference type="ChEBI" id="CHEBI:29105"/>
        <label>1</label>
    </ligand>
</feature>
<feature type="binding site" evidence="1">
    <location>
        <position position="145"/>
    </location>
    <ligand>
        <name>Zn(2+)</name>
        <dbReference type="ChEBI" id="CHEBI:29105"/>
        <label>2</label>
    </ligand>
</feature>
<feature type="binding site" evidence="1">
    <location>
        <position position="148"/>
    </location>
    <ligand>
        <name>Zn(2+)</name>
        <dbReference type="ChEBI" id="CHEBI:29105"/>
        <label>2</label>
    </ligand>
</feature>
<feature type="binding site" evidence="1">
    <location>
        <position position="153"/>
    </location>
    <ligand>
        <name>Zn(2+)</name>
        <dbReference type="ChEBI" id="CHEBI:29105"/>
        <label>1</label>
    </ligand>
</feature>
<feature type="binding site" evidence="1">
    <location>
        <position position="157"/>
    </location>
    <ligand>
        <name>Zn(2+)</name>
        <dbReference type="ChEBI" id="CHEBI:29105"/>
        <label>1</label>
    </ligand>
</feature>
<feature type="binding site" evidence="1">
    <location>
        <position position="161"/>
    </location>
    <ligand>
        <name>Zn(2+)</name>
        <dbReference type="ChEBI" id="CHEBI:29105"/>
        <label>2</label>
    </ligand>
</feature>
<feature type="binding site" evidence="1">
    <location>
        <position position="166"/>
    </location>
    <ligand>
        <name>Zn(2+)</name>
        <dbReference type="ChEBI" id="CHEBI:29105"/>
        <label>2</label>
    </ligand>
</feature>
<evidence type="ECO:0000255" key="1">
    <source>
        <dbReference type="PROSITE-ProRule" id="PRU00453"/>
    </source>
</evidence>
<evidence type="ECO:0000256" key="2">
    <source>
        <dbReference type="SAM" id="MobiDB-lite"/>
    </source>
</evidence>
<evidence type="ECO:0000269" key="3">
    <source>
    </source>
</evidence>
<evidence type="ECO:0000269" key="4">
    <source>
    </source>
</evidence>
<evidence type="ECO:0000269" key="5">
    <source>
    </source>
</evidence>
<evidence type="ECO:0000305" key="6"/>
<sequence>MEEEMSNRRVSNRTRKVATKMAAALTSNDNRTQAAIARLEALENDNGAIEVIDLNDDEEASLDEDDDLGYLQKKQHKGSKRKTRQAKALEARKAPKSFLELLQEANLESLPSHVPTYLKAAVGPPSSSSRRYFCSVCGYIAGYNCCLCGMRFCSIRCQNIHKDTRCQKFVA</sequence>
<keyword id="KW-0217">Developmental protein</keyword>
<keyword id="KW-0221">Differentiation</keyword>
<keyword id="KW-0287">Flowering</keyword>
<keyword id="KW-0479">Metal-binding</keyword>
<keyword id="KW-0539">Nucleus</keyword>
<keyword id="KW-1185">Reference proteome</keyword>
<keyword id="KW-0862">Zinc</keyword>
<keyword id="KW-0863">Zinc-finger</keyword>
<proteinExistence type="evidence at protein level"/>
<reference key="1">
    <citation type="journal article" date="1999" name="DNA Res.">
        <title>Structural analysis of Arabidopsis thaliana chromosome 5. IX. Sequence features of the regions of 1,011,550 bp covered by seventeen P1 and TAC clones.</title>
        <authorList>
            <person name="Kaneko T."/>
            <person name="Katoh T."/>
            <person name="Sato S."/>
            <person name="Nakamura Y."/>
            <person name="Asamizu E."/>
            <person name="Kotani H."/>
            <person name="Miyajima N."/>
            <person name="Tabata S."/>
        </authorList>
    </citation>
    <scope>NUCLEOTIDE SEQUENCE [LARGE SCALE GENOMIC DNA]</scope>
    <source>
        <strain>cv. Columbia</strain>
    </source>
</reference>
<reference key="2">
    <citation type="journal article" date="2017" name="Plant J.">
        <title>Araport11: a complete reannotation of the Arabidopsis thaliana reference genome.</title>
        <authorList>
            <person name="Cheng C.Y."/>
            <person name="Krishnakumar V."/>
            <person name="Chan A.P."/>
            <person name="Thibaud-Nissen F."/>
            <person name="Schobel S."/>
            <person name="Town C.D."/>
        </authorList>
    </citation>
    <scope>GENOME REANNOTATION</scope>
    <source>
        <strain>cv. Columbia</strain>
    </source>
</reference>
<reference key="3">
    <citation type="journal article" date="2003" name="Science">
        <title>Empirical analysis of transcriptional activity in the Arabidopsis genome.</title>
        <authorList>
            <person name="Yamada K."/>
            <person name="Lim J."/>
            <person name="Dale J.M."/>
            <person name="Chen H."/>
            <person name="Shinn P."/>
            <person name="Palm C.J."/>
            <person name="Southwick A.M."/>
            <person name="Wu H.C."/>
            <person name="Kim C.J."/>
            <person name="Nguyen M."/>
            <person name="Pham P.K."/>
            <person name="Cheuk R.F."/>
            <person name="Karlin-Newmann G."/>
            <person name="Liu S.X."/>
            <person name="Lam B."/>
            <person name="Sakano H."/>
            <person name="Wu T."/>
            <person name="Yu G."/>
            <person name="Miranda M."/>
            <person name="Quach H.L."/>
            <person name="Tripp M."/>
            <person name="Chang C.H."/>
            <person name="Lee J.M."/>
            <person name="Toriumi M.J."/>
            <person name="Chan M.M."/>
            <person name="Tang C.C."/>
            <person name="Onodera C.S."/>
            <person name="Deng J.M."/>
            <person name="Akiyama K."/>
            <person name="Ansari Y."/>
            <person name="Arakawa T."/>
            <person name="Banh J."/>
            <person name="Banno F."/>
            <person name="Bowser L."/>
            <person name="Brooks S.Y."/>
            <person name="Carninci P."/>
            <person name="Chao Q."/>
            <person name="Choy N."/>
            <person name="Enju A."/>
            <person name="Goldsmith A.D."/>
            <person name="Gurjal M."/>
            <person name="Hansen N.F."/>
            <person name="Hayashizaki Y."/>
            <person name="Johnson-Hopson C."/>
            <person name="Hsuan V.W."/>
            <person name="Iida K."/>
            <person name="Karnes M."/>
            <person name="Khan S."/>
            <person name="Koesema E."/>
            <person name="Ishida J."/>
            <person name="Jiang P.X."/>
            <person name="Jones T."/>
            <person name="Kawai J."/>
            <person name="Kamiya A."/>
            <person name="Meyers C."/>
            <person name="Nakajima M."/>
            <person name="Narusaka M."/>
            <person name="Seki M."/>
            <person name="Sakurai T."/>
            <person name="Satou M."/>
            <person name="Tamse R."/>
            <person name="Vaysberg M."/>
            <person name="Wallender E.K."/>
            <person name="Wong C."/>
            <person name="Yamamura Y."/>
            <person name="Yuan S."/>
            <person name="Shinozaki K."/>
            <person name="Davis R.W."/>
            <person name="Theologis A."/>
            <person name="Ecker J.R."/>
        </authorList>
    </citation>
    <scope>NUCLEOTIDE SEQUENCE [LARGE SCALE MRNA]</scope>
    <source>
        <strain>cv. Columbia</strain>
    </source>
</reference>
<reference key="4">
    <citation type="submission" date="2004-09" db="EMBL/GenBank/DDBJ databases">
        <title>Large-scale analysis of RIKEN Arabidopsis full-length (RAFL) cDNAs.</title>
        <authorList>
            <person name="Totoki Y."/>
            <person name="Seki M."/>
            <person name="Ishida J."/>
            <person name="Nakajima M."/>
            <person name="Enju A."/>
            <person name="Kamiya A."/>
            <person name="Narusaka M."/>
            <person name="Shin-i T."/>
            <person name="Nakagawa M."/>
            <person name="Sakamoto N."/>
            <person name="Oishi K."/>
            <person name="Kohara Y."/>
            <person name="Kobayashi M."/>
            <person name="Toyoda A."/>
            <person name="Sakaki Y."/>
            <person name="Sakurai T."/>
            <person name="Iida K."/>
            <person name="Akiyama K."/>
            <person name="Satou M."/>
            <person name="Toyoda T."/>
            <person name="Konagaya A."/>
            <person name="Carninci P."/>
            <person name="Kawai J."/>
            <person name="Hayashizaki Y."/>
            <person name="Shinozaki K."/>
        </authorList>
    </citation>
    <scope>NUCLEOTIDE SEQUENCE [LARGE SCALE MRNA]</scope>
    <source>
        <strain>cv. Columbia</strain>
    </source>
</reference>
<reference key="5">
    <citation type="journal article" date="2007" name="Development">
        <title>Arabidopsis homologs of components of the SWR1 complex regulate flowering and plant development.</title>
        <authorList>
            <person name="Choi K."/>
            <person name="Park C."/>
            <person name="Lee J."/>
            <person name="Oh M."/>
            <person name="Noh B."/>
            <person name="Lee I."/>
        </authorList>
    </citation>
    <scope>FUNCTION</scope>
    <scope>INTERACTION WITH ARP6 AND SWC2</scope>
    <scope>SUBUNIT</scope>
    <scope>DISRUPTION PHENOTYPE</scope>
    <scope>TISSUE SPECIFICITY</scope>
    <scope>INDUCTION</scope>
    <scope>SUBCELLULAR LOCATION</scope>
</reference>
<reference key="6">
    <citation type="journal article" date="2007" name="Plant Physiol.">
        <title>SEF, a new protein required for flowering repression in Arabidopsis, interacts with PIE1 and ARP6.</title>
        <authorList>
            <person name="March-Diaz R."/>
            <person name="Garcia-Dominguez M."/>
            <person name="Florencio F.J."/>
            <person name="Reyes J.C."/>
        </authorList>
    </citation>
    <scope>FUNCTION</scope>
    <scope>DISRUPTION PHENOTYPE</scope>
    <scope>TISSUE SPECIFICITY</scope>
    <scope>INTERACTION WITH ARP6 AND PIE1</scope>
</reference>
<reference key="7">
    <citation type="journal article" date="2011" name="Plant Cell">
        <title>The FRIGIDA complex activates transcription of FLC, a strong flowering repressor in Arabidopsis, by recruiting chromatin modification factors.</title>
        <authorList>
            <person name="Choi K."/>
            <person name="Kim J."/>
            <person name="Hwang H.J."/>
            <person name="Kim S."/>
            <person name="Park C."/>
            <person name="Kim S.Y."/>
            <person name="Lee I."/>
        </authorList>
    </citation>
    <scope>FUNCTION</scope>
    <scope>INTERACTION WITH FLX; SUF4; ASHH2 AND TAF14</scope>
</reference>
<organism>
    <name type="scientific">Arabidopsis thaliana</name>
    <name type="common">Mouse-ear cress</name>
    <dbReference type="NCBI Taxonomy" id="3702"/>
    <lineage>
        <taxon>Eukaryota</taxon>
        <taxon>Viridiplantae</taxon>
        <taxon>Streptophyta</taxon>
        <taxon>Embryophyta</taxon>
        <taxon>Tracheophyta</taxon>
        <taxon>Spermatophyta</taxon>
        <taxon>Magnoliopsida</taxon>
        <taxon>eudicotyledons</taxon>
        <taxon>Gunneridae</taxon>
        <taxon>Pentapetalae</taxon>
        <taxon>rosids</taxon>
        <taxon>malvids</taxon>
        <taxon>Brassicales</taxon>
        <taxon>Brassicaceae</taxon>
        <taxon>Camelineae</taxon>
        <taxon>Arabidopsis</taxon>
    </lineage>
</organism>
<protein>
    <recommendedName>
        <fullName>SWR1 complex subunit 6</fullName>
    </recommendedName>
    <alternativeName>
        <fullName>Protein SERRATED LEAVES AND EARLY FLOWERING</fullName>
    </alternativeName>
</protein>
<comment type="function">
    <text evidence="3 4 5">Component of the SWR1 complex which mediates the ATP-dependent exchange of histone H2A for the H2A variant H2A.F/Z leading to transcriptional regulation of selected genes (e.g. FLC) by chromatin remodeling. Coodinates SWR1-C, FRI-C (FLC transcription activator complex), histone methyltransferase and general transcription factors. Represses flowering by positively regulating FLC and MAF4. Binds to the promoter region of FLC chromatin.</text>
</comment>
<comment type="subunit">
    <text evidence="3 4 5">Homodimer. Component of the SWR1 chromatin-remodeling complex composed of at least ARP6/ESD1/SUF3, PIE1, SWC6, SWC2 and H2AZs (HTA8, HTA9, HTA11). Interacts directly with ARP6, PIE1 and SWC2. Interacts with FLX and SUF4, two component of the transcription activator complex FRI-C, and with ASHH2 and TAF14.</text>
</comment>
<comment type="interaction">
    <interactant intactId="EBI-1537353">
        <id>Q9FHW2</id>
    </interactant>
    <interactant intactId="EBI-1537316">
        <id>Q8LGE3</id>
        <label>ARP6</label>
    </interactant>
    <organismsDiffer>false</organismsDiffer>
    <experiments>6</experiments>
</comment>
<comment type="interaction">
    <interactant intactId="EBI-1537353">
        <id>Q9FHW2</id>
    </interactant>
    <interactant intactId="EBI-25506855">
        <id>O23160</id>
        <label>MYB73</label>
    </interactant>
    <organismsDiffer>false</organismsDiffer>
    <experiments>3</experiments>
</comment>
<comment type="interaction">
    <interactant intactId="EBI-1537353">
        <id>Q9FHW2</id>
    </interactant>
    <interactant intactId="EBI-1537462">
        <id>Q7X9V2</id>
        <label>PIE1</label>
    </interactant>
    <organismsDiffer>false</organismsDiffer>
    <experiments>4</experiments>
</comment>
<comment type="interaction">
    <interactant intactId="EBI-1537353">
        <id>Q9FHW2</id>
    </interactant>
    <interactant intactId="EBI-1537394">
        <id>F4IP06</id>
        <label>SWC2</label>
    </interactant>
    <organismsDiffer>false</organismsDiffer>
    <experiments>3</experiments>
</comment>
<comment type="interaction">
    <interactant intactId="EBI-1537353">
        <id>Q9FHW2</id>
    </interactant>
    <interactant intactId="EBI-1537353">
        <id>Q9FHW2</id>
        <label>SWC6</label>
    </interactant>
    <organismsDiffer>false</organismsDiffer>
    <experiments>2</experiments>
</comment>
<comment type="subcellular location">
    <subcellularLocation>
        <location evidence="4">Nucleus speckle</location>
    </subcellularLocation>
    <subcellularLocation>
        <location evidence="4">Nucleus</location>
    </subcellularLocation>
    <text>Relocates to the nuclear periphery when interacting with ARP6.</text>
</comment>
<comment type="tissue specificity">
    <text evidence="3 4">Expressed in root, lateral root primordia, shoot apex, leaves, stems, inflorescences, flowers, axillary buds, developing siliques and premature seeds.</text>
</comment>
<comment type="induction">
    <text evidence="4">Not regulated by circadian rhythm, photoperiod or vernalization.</text>
</comment>
<comment type="disruption phenotype">
    <text evidence="3 4">Early flowering, leaf serration, production of extra petals and weak apical dominance.</text>
</comment>
<comment type="similarity">
    <text evidence="6">Belongs to the ZNHIT1 family.</text>
</comment>
<gene>
    <name type="primary">SWC6</name>
    <name type="synonym">SEF</name>
    <name type="ordered locus">At5g37055</name>
    <name type="ORF">MJG14.20</name>
    <name type="ORF">MJG14.4</name>
</gene>
<accession>Q9FHW2</accession>
<dbReference type="EMBL" id="AB017068">
    <property type="protein sequence ID" value="BAB11357.1"/>
    <property type="molecule type" value="Genomic_DNA"/>
</dbReference>
<dbReference type="EMBL" id="CP002688">
    <property type="protein sequence ID" value="AED94142.1"/>
    <property type="molecule type" value="Genomic_DNA"/>
</dbReference>
<dbReference type="EMBL" id="AF378857">
    <property type="protein sequence ID" value="AAK55660.1"/>
    <property type="molecule type" value="mRNA"/>
</dbReference>
<dbReference type="EMBL" id="AY050464">
    <property type="protein sequence ID" value="AAK91477.1"/>
    <property type="molecule type" value="mRNA"/>
</dbReference>
<dbReference type="EMBL" id="AK175306">
    <property type="protein sequence ID" value="BAD43069.1"/>
    <property type="molecule type" value="mRNA"/>
</dbReference>
<dbReference type="RefSeq" id="NP_568545.1">
    <property type="nucleotide sequence ID" value="NM_123064.3"/>
</dbReference>
<dbReference type="BioGRID" id="18927">
    <property type="interactions" value="10"/>
</dbReference>
<dbReference type="FunCoup" id="Q9FHW2">
    <property type="interactions" value="2395"/>
</dbReference>
<dbReference type="IntAct" id="Q9FHW2">
    <property type="interactions" value="5"/>
</dbReference>
<dbReference type="STRING" id="3702.Q9FHW2"/>
<dbReference type="SwissPalm" id="Q9FHW2"/>
<dbReference type="PaxDb" id="3702-AT5G37055.1"/>
<dbReference type="ProteomicsDB" id="226572"/>
<dbReference type="EnsemblPlants" id="AT5G37055.1">
    <property type="protein sequence ID" value="AT5G37055.1"/>
    <property type="gene ID" value="AT5G37055"/>
</dbReference>
<dbReference type="GeneID" id="833676"/>
<dbReference type="Gramene" id="AT5G37055.1">
    <property type="protein sequence ID" value="AT5G37055.1"/>
    <property type="gene ID" value="AT5G37055"/>
</dbReference>
<dbReference type="KEGG" id="ath:AT5G37055"/>
<dbReference type="Araport" id="AT5G37055"/>
<dbReference type="TAIR" id="AT5G37055">
    <property type="gene designation" value="SEF"/>
</dbReference>
<dbReference type="eggNOG" id="KOG3362">
    <property type="taxonomic scope" value="Eukaryota"/>
</dbReference>
<dbReference type="HOGENOM" id="CLU_106918_0_0_1"/>
<dbReference type="InParanoid" id="Q9FHW2"/>
<dbReference type="OMA" id="CIPCGAR"/>
<dbReference type="PhylomeDB" id="Q9FHW2"/>
<dbReference type="PRO" id="PR:Q9FHW2"/>
<dbReference type="Proteomes" id="UP000006548">
    <property type="component" value="Chromosome 5"/>
</dbReference>
<dbReference type="ExpressionAtlas" id="Q9FHW2">
    <property type="expression patterns" value="baseline and differential"/>
</dbReference>
<dbReference type="GO" id="GO:0016607">
    <property type="term" value="C:nuclear speck"/>
    <property type="evidence" value="ECO:0007669"/>
    <property type="project" value="UniProtKB-SubCell"/>
</dbReference>
<dbReference type="GO" id="GO:0005634">
    <property type="term" value="C:nucleus"/>
    <property type="evidence" value="ECO:0000314"/>
    <property type="project" value="TAIR"/>
</dbReference>
<dbReference type="GO" id="GO:0000812">
    <property type="term" value="C:Swr1 complex"/>
    <property type="evidence" value="ECO:0000314"/>
    <property type="project" value="TAIR"/>
</dbReference>
<dbReference type="GO" id="GO:0042802">
    <property type="term" value="F:identical protein binding"/>
    <property type="evidence" value="ECO:0000353"/>
    <property type="project" value="IntAct"/>
</dbReference>
<dbReference type="GO" id="GO:0008270">
    <property type="term" value="F:zinc ion binding"/>
    <property type="evidence" value="ECO:0007669"/>
    <property type="project" value="UniProtKB-KW"/>
</dbReference>
<dbReference type="GO" id="GO:0030154">
    <property type="term" value="P:cell differentiation"/>
    <property type="evidence" value="ECO:0007669"/>
    <property type="project" value="UniProtKB-KW"/>
</dbReference>
<dbReference type="GO" id="GO:0006338">
    <property type="term" value="P:chromatin remodeling"/>
    <property type="evidence" value="ECO:0007669"/>
    <property type="project" value="InterPro"/>
</dbReference>
<dbReference type="GO" id="GO:0042742">
    <property type="term" value="P:defense response to bacterium"/>
    <property type="evidence" value="ECO:0000316"/>
    <property type="project" value="TAIR"/>
</dbReference>
<dbReference type="GO" id="GO:0009908">
    <property type="term" value="P:flower development"/>
    <property type="evidence" value="ECO:0007669"/>
    <property type="project" value="UniProtKB-KW"/>
</dbReference>
<dbReference type="GO" id="GO:0048638">
    <property type="term" value="P:regulation of developmental growth"/>
    <property type="evidence" value="ECO:0000315"/>
    <property type="project" value="TAIR"/>
</dbReference>
<dbReference type="GO" id="GO:0009909">
    <property type="term" value="P:regulation of flower development"/>
    <property type="evidence" value="ECO:0000315"/>
    <property type="project" value="TAIR"/>
</dbReference>
<dbReference type="CDD" id="cd21437">
    <property type="entry name" value="zf-HIT_ZNHIT1_like"/>
    <property type="match status" value="1"/>
</dbReference>
<dbReference type="InterPro" id="IPR039723">
    <property type="entry name" value="Vps71/ZNHIT1"/>
</dbReference>
<dbReference type="InterPro" id="IPR007529">
    <property type="entry name" value="Znf_HIT"/>
</dbReference>
<dbReference type="PANTHER" id="PTHR13093">
    <property type="entry name" value="ZINC FINGER HIT DOMAIN CONTAINING PROTEIN 1"/>
    <property type="match status" value="1"/>
</dbReference>
<dbReference type="Pfam" id="PF04438">
    <property type="entry name" value="zf-HIT"/>
    <property type="match status" value="1"/>
</dbReference>
<dbReference type="PROSITE" id="PS51083">
    <property type="entry name" value="ZF_HIT"/>
    <property type="match status" value="1"/>
</dbReference>
<name>SWC6_ARATH</name>